<comment type="subunit">
    <text evidence="1">Part of the 50S ribosomal subunit.</text>
</comment>
<comment type="similarity">
    <text evidence="1">Belongs to the universal ribosomal protein uL30 family.</text>
</comment>
<dbReference type="EMBL" id="CP001403">
    <property type="protein sequence ID" value="ACP45703.1"/>
    <property type="molecule type" value="Genomic_DNA"/>
</dbReference>
<dbReference type="RefSeq" id="WP_012716181.1">
    <property type="nucleotide sequence ID" value="NC_012622.1"/>
</dbReference>
<dbReference type="SMR" id="C3NEG4"/>
<dbReference type="GeneID" id="7806023"/>
<dbReference type="KEGG" id="siy:YG5714_1436"/>
<dbReference type="HOGENOM" id="CLU_055156_6_0_2"/>
<dbReference type="Proteomes" id="UP000002308">
    <property type="component" value="Chromosome"/>
</dbReference>
<dbReference type="GO" id="GO:0022625">
    <property type="term" value="C:cytosolic large ribosomal subunit"/>
    <property type="evidence" value="ECO:0007669"/>
    <property type="project" value="TreeGrafter"/>
</dbReference>
<dbReference type="GO" id="GO:0003723">
    <property type="term" value="F:RNA binding"/>
    <property type="evidence" value="ECO:0007669"/>
    <property type="project" value="TreeGrafter"/>
</dbReference>
<dbReference type="GO" id="GO:0003735">
    <property type="term" value="F:structural constituent of ribosome"/>
    <property type="evidence" value="ECO:0007669"/>
    <property type="project" value="InterPro"/>
</dbReference>
<dbReference type="GO" id="GO:0000463">
    <property type="term" value="P:maturation of LSU-rRNA from tricistronic rRNA transcript (SSU-rRNA, 5.8S rRNA, LSU-rRNA)"/>
    <property type="evidence" value="ECO:0007669"/>
    <property type="project" value="TreeGrafter"/>
</dbReference>
<dbReference type="GO" id="GO:0006412">
    <property type="term" value="P:translation"/>
    <property type="evidence" value="ECO:0007669"/>
    <property type="project" value="UniProtKB-UniRule"/>
</dbReference>
<dbReference type="CDD" id="cd01657">
    <property type="entry name" value="Ribosomal_L7_archeal_euk"/>
    <property type="match status" value="1"/>
</dbReference>
<dbReference type="Gene3D" id="1.10.15.30">
    <property type="match status" value="1"/>
</dbReference>
<dbReference type="Gene3D" id="3.30.1390.20">
    <property type="entry name" value="Ribosomal protein L30, ferredoxin-like fold domain"/>
    <property type="match status" value="1"/>
</dbReference>
<dbReference type="HAMAP" id="MF_01371_A">
    <property type="entry name" value="Ribosomal_uL30_A"/>
    <property type="match status" value="1"/>
</dbReference>
<dbReference type="InterPro" id="IPR036919">
    <property type="entry name" value="Ribo_uL30_ferredoxin-like_sf"/>
</dbReference>
<dbReference type="InterPro" id="IPR039699">
    <property type="entry name" value="Ribosomal_uL30"/>
</dbReference>
<dbReference type="InterPro" id="IPR005997">
    <property type="entry name" value="Ribosomal_uL30_arc"/>
</dbReference>
<dbReference type="InterPro" id="IPR035808">
    <property type="entry name" value="Ribosomal_uL30_euk_arc"/>
</dbReference>
<dbReference type="InterPro" id="IPR016082">
    <property type="entry name" value="Ribosomal_uL30_ferredoxin-like"/>
</dbReference>
<dbReference type="NCBIfam" id="NF004711">
    <property type="entry name" value="PRK06049.1"/>
    <property type="match status" value="1"/>
</dbReference>
<dbReference type="NCBIfam" id="TIGR01309">
    <property type="entry name" value="uL30_arch"/>
    <property type="match status" value="1"/>
</dbReference>
<dbReference type="PANTHER" id="PTHR11524">
    <property type="entry name" value="60S RIBOSOMAL PROTEIN L7"/>
    <property type="match status" value="1"/>
</dbReference>
<dbReference type="PANTHER" id="PTHR11524:SF16">
    <property type="entry name" value="LARGE RIBOSOMAL SUBUNIT PROTEIN UL30"/>
    <property type="match status" value="1"/>
</dbReference>
<dbReference type="Pfam" id="PF00327">
    <property type="entry name" value="Ribosomal_L30"/>
    <property type="match status" value="1"/>
</dbReference>
<dbReference type="SUPFAM" id="SSF55129">
    <property type="entry name" value="Ribosomal protein L30p/L7e"/>
    <property type="match status" value="1"/>
</dbReference>
<evidence type="ECO:0000255" key="1">
    <source>
        <dbReference type="HAMAP-Rule" id="MF_01371"/>
    </source>
</evidence>
<evidence type="ECO:0000305" key="2"/>
<keyword id="KW-0687">Ribonucleoprotein</keyword>
<keyword id="KW-0689">Ribosomal protein</keyword>
<accession>C3NEG4</accession>
<sequence>MVELLGIIRIRGWAKAPWYINETLEMLRLRYNFNTMMYPKTSQILGMLNKVSPYVTWGEIDPDTLKLLIIKRLETAKGDKVSDSYVKEVLKIENIDTMVKQLYEGKIYLHKLDQYFKLPIRLHPPKGGFKGSVKRPYKNKGEFGYRGNKINELMRRMM</sequence>
<proteinExistence type="inferred from homology"/>
<organism>
    <name type="scientific">Saccharolobus islandicus (strain Y.G.57.14 / Yellowstone #1)</name>
    <name type="common">Sulfolobus islandicus</name>
    <dbReference type="NCBI Taxonomy" id="439386"/>
    <lineage>
        <taxon>Archaea</taxon>
        <taxon>Thermoproteota</taxon>
        <taxon>Thermoprotei</taxon>
        <taxon>Sulfolobales</taxon>
        <taxon>Sulfolobaceae</taxon>
        <taxon>Saccharolobus</taxon>
    </lineage>
</organism>
<feature type="chain" id="PRO_1000215080" description="Large ribosomal subunit protein uL30">
    <location>
        <begin position="1"/>
        <end position="158"/>
    </location>
</feature>
<gene>
    <name evidence="1" type="primary">rpl30</name>
    <name type="ordered locus">YG5714_1436</name>
</gene>
<reference key="1">
    <citation type="journal article" date="2009" name="Proc. Natl. Acad. Sci. U.S.A.">
        <title>Biogeography of the Sulfolobus islandicus pan-genome.</title>
        <authorList>
            <person name="Reno M.L."/>
            <person name="Held N.L."/>
            <person name="Fields C.J."/>
            <person name="Burke P.V."/>
            <person name="Whitaker R.J."/>
        </authorList>
    </citation>
    <scope>NUCLEOTIDE SEQUENCE [LARGE SCALE GENOMIC DNA]</scope>
    <source>
        <strain>Y.G.57.14 / Yellowstone #1</strain>
    </source>
</reference>
<protein>
    <recommendedName>
        <fullName evidence="1">Large ribosomal subunit protein uL30</fullName>
    </recommendedName>
    <alternativeName>
        <fullName evidence="2">50S ribosomal protein L30</fullName>
    </alternativeName>
</protein>
<name>RL30_SACI7</name>